<accession>Q9ZI54</accession>
<keyword id="KW-0058">Aromatic hydrocarbons catabolism</keyword>
<keyword id="KW-0413">Isomerase</keyword>
<keyword id="KW-0614">Plasmid</keyword>
<evidence type="ECO:0000250" key="1"/>
<evidence type="ECO:0000305" key="2"/>
<gene>
    <name type="primary">nahJ</name>
</gene>
<feature type="initiator methionine" description="Removed" evidence="1">
    <location>
        <position position="1"/>
    </location>
</feature>
<feature type="chain" id="PRO_0000209518" description="2-hydroxymuconate tautomerase">
    <location>
        <begin position="2"/>
        <end position="63"/>
    </location>
</feature>
<feature type="active site" description="Proton acceptor; via imino nitrogen" evidence="1">
    <location>
        <position position="2"/>
    </location>
</feature>
<dbReference type="EC" id="5.3.2.6"/>
<dbReference type="EMBL" id="AF039534">
    <property type="protein sequence ID" value="AAD02155.1"/>
    <property type="molecule type" value="Genomic_DNA"/>
</dbReference>
<dbReference type="SMR" id="Q9ZI54"/>
<dbReference type="UniPathway" id="UPA00824"/>
<dbReference type="GO" id="GO:0016853">
    <property type="term" value="F:isomerase activity"/>
    <property type="evidence" value="ECO:0007669"/>
    <property type="project" value="UniProtKB-KW"/>
</dbReference>
<dbReference type="GO" id="GO:0046244">
    <property type="term" value="P:salicylic acid catabolic process"/>
    <property type="evidence" value="ECO:0007669"/>
    <property type="project" value="UniProtKB-UniPathway"/>
</dbReference>
<dbReference type="CDD" id="cd00491">
    <property type="entry name" value="4Oxalocrotonate_Tautomerase"/>
    <property type="match status" value="1"/>
</dbReference>
<dbReference type="Gene3D" id="3.30.429.10">
    <property type="entry name" value="Macrophage Migration Inhibitory Factor"/>
    <property type="match status" value="1"/>
</dbReference>
<dbReference type="InterPro" id="IPR018191">
    <property type="entry name" value="4-OT"/>
</dbReference>
<dbReference type="InterPro" id="IPR004370">
    <property type="entry name" value="4-OT-like_dom"/>
</dbReference>
<dbReference type="InterPro" id="IPR014347">
    <property type="entry name" value="Tautomerase/MIF_sf"/>
</dbReference>
<dbReference type="NCBIfam" id="NF002571">
    <property type="entry name" value="PRK02220.1"/>
    <property type="match status" value="1"/>
</dbReference>
<dbReference type="NCBIfam" id="TIGR00013">
    <property type="entry name" value="taut"/>
    <property type="match status" value="1"/>
</dbReference>
<dbReference type="PANTHER" id="PTHR35530:SF1">
    <property type="entry name" value="2-HYDROXYMUCONATE TAUTOMERASE"/>
    <property type="match status" value="1"/>
</dbReference>
<dbReference type="PANTHER" id="PTHR35530">
    <property type="entry name" value="TAUTOMERASE-RELATED"/>
    <property type="match status" value="1"/>
</dbReference>
<dbReference type="Pfam" id="PF01361">
    <property type="entry name" value="Tautomerase"/>
    <property type="match status" value="1"/>
</dbReference>
<dbReference type="SUPFAM" id="SSF55331">
    <property type="entry name" value="Tautomerase/MIF"/>
    <property type="match status" value="1"/>
</dbReference>
<protein>
    <recommendedName>
        <fullName>2-hydroxymuconate tautomerase</fullName>
        <ecNumber>5.3.2.6</ecNumber>
    </recommendedName>
    <alternativeName>
        <fullName>4-oxalocrotonate tautomerase</fullName>
        <shortName>4-OT</shortName>
    </alternativeName>
</protein>
<proteinExistence type="inferred from homology"/>
<organism>
    <name type="scientific">Stutzerimonas stutzeri</name>
    <name type="common">Pseudomonas stutzeri</name>
    <dbReference type="NCBI Taxonomy" id="316"/>
    <lineage>
        <taxon>Bacteria</taxon>
        <taxon>Pseudomonadati</taxon>
        <taxon>Pseudomonadota</taxon>
        <taxon>Gammaproteobacteria</taxon>
        <taxon>Pseudomonadales</taxon>
        <taxon>Pseudomonadaceae</taxon>
        <taxon>Stutzerimonas</taxon>
    </lineage>
</organism>
<comment type="function">
    <text>Catalyzes the ketonization of 2-hydroxymuconate stereoselectively to yield 2-oxo-3-hexenedioate.</text>
</comment>
<comment type="catalytic activity">
    <reaction>
        <text>(2Z,4E)-2-hydroxyhexa-2,4-dienedioate = (3E)-2-oxohex-3-enedioate</text>
        <dbReference type="Rhea" id="RHEA:33431"/>
        <dbReference type="ChEBI" id="CHEBI:28080"/>
        <dbReference type="ChEBI" id="CHEBI:64908"/>
        <dbReference type="EC" id="5.3.2.6"/>
    </reaction>
</comment>
<comment type="pathway">
    <text>Aromatic compound metabolism; salicylate degradation.</text>
</comment>
<comment type="subunit">
    <text evidence="1">Homohexamer.</text>
</comment>
<comment type="similarity">
    <text evidence="2">Belongs to the 4-oxalocrotonate tautomerase family.</text>
</comment>
<reference key="1">
    <citation type="journal article" date="2000" name="Gene">
        <title>Complete nucleotide sequence and evolutionary significance of a chromosomally encoded naphthalene-degradation lower pathway from Pseudomonas stutzeri AN10.</title>
        <authorList>
            <person name="Bosch R."/>
            <person name="Garcia-Valdes E."/>
            <person name="Moore E.R.B."/>
        </authorList>
    </citation>
    <scope>NUCLEOTIDE SEQUENCE [GENOMIC DNA]</scope>
    <source>
        <strain>AN10</strain>
    </source>
</reference>
<sequence>MPIAQIHILEGRSDEQKETLIREVSEAISRSLDAPLTSVRVIITEMPKVHFGIGGESAKAIGR</sequence>
<name>4OT_STUST</name>